<organism>
    <name type="scientific">Prochlorococcus marinus (strain AS9601)</name>
    <dbReference type="NCBI Taxonomy" id="146891"/>
    <lineage>
        <taxon>Bacteria</taxon>
        <taxon>Bacillati</taxon>
        <taxon>Cyanobacteriota</taxon>
        <taxon>Cyanophyceae</taxon>
        <taxon>Synechococcales</taxon>
        <taxon>Prochlorococcaceae</taxon>
        <taxon>Prochlorococcus</taxon>
    </lineage>
</organism>
<reference key="1">
    <citation type="journal article" date="2007" name="PLoS Genet.">
        <title>Patterns and implications of gene gain and loss in the evolution of Prochlorococcus.</title>
        <authorList>
            <person name="Kettler G.C."/>
            <person name="Martiny A.C."/>
            <person name="Huang K."/>
            <person name="Zucker J."/>
            <person name="Coleman M.L."/>
            <person name="Rodrigue S."/>
            <person name="Chen F."/>
            <person name="Lapidus A."/>
            <person name="Ferriera S."/>
            <person name="Johnson J."/>
            <person name="Steglich C."/>
            <person name="Church G.M."/>
            <person name="Richardson P."/>
            <person name="Chisholm S.W."/>
        </authorList>
    </citation>
    <scope>NUCLEOTIDE SEQUENCE [LARGE SCALE GENOMIC DNA]</scope>
    <source>
        <strain>AS9601</strain>
    </source>
</reference>
<dbReference type="EMBL" id="CP000551">
    <property type="protein sequence ID" value="ABM71046.1"/>
    <property type="molecule type" value="Genomic_DNA"/>
</dbReference>
<dbReference type="RefSeq" id="WP_011819168.1">
    <property type="nucleotide sequence ID" value="NC_008816.1"/>
</dbReference>
<dbReference type="SMR" id="A2BTD5"/>
<dbReference type="STRING" id="146891.A9601_17631"/>
<dbReference type="KEGG" id="pmb:A9601_17631"/>
<dbReference type="eggNOG" id="COG0089">
    <property type="taxonomic scope" value="Bacteria"/>
</dbReference>
<dbReference type="HOGENOM" id="CLU_037562_3_2_3"/>
<dbReference type="OrthoDB" id="9793353at2"/>
<dbReference type="Proteomes" id="UP000002590">
    <property type="component" value="Chromosome"/>
</dbReference>
<dbReference type="GO" id="GO:1990904">
    <property type="term" value="C:ribonucleoprotein complex"/>
    <property type="evidence" value="ECO:0007669"/>
    <property type="project" value="UniProtKB-KW"/>
</dbReference>
<dbReference type="GO" id="GO:0005840">
    <property type="term" value="C:ribosome"/>
    <property type="evidence" value="ECO:0007669"/>
    <property type="project" value="UniProtKB-KW"/>
</dbReference>
<dbReference type="GO" id="GO:0019843">
    <property type="term" value="F:rRNA binding"/>
    <property type="evidence" value="ECO:0007669"/>
    <property type="project" value="UniProtKB-UniRule"/>
</dbReference>
<dbReference type="GO" id="GO:0003735">
    <property type="term" value="F:structural constituent of ribosome"/>
    <property type="evidence" value="ECO:0007669"/>
    <property type="project" value="InterPro"/>
</dbReference>
<dbReference type="GO" id="GO:0006412">
    <property type="term" value="P:translation"/>
    <property type="evidence" value="ECO:0007669"/>
    <property type="project" value="UniProtKB-UniRule"/>
</dbReference>
<dbReference type="FunFam" id="3.30.70.330:FF:000001">
    <property type="entry name" value="50S ribosomal protein L23"/>
    <property type="match status" value="1"/>
</dbReference>
<dbReference type="Gene3D" id="3.30.70.330">
    <property type="match status" value="1"/>
</dbReference>
<dbReference type="HAMAP" id="MF_01369_B">
    <property type="entry name" value="Ribosomal_uL23_B"/>
    <property type="match status" value="1"/>
</dbReference>
<dbReference type="InterPro" id="IPR012677">
    <property type="entry name" value="Nucleotide-bd_a/b_plait_sf"/>
</dbReference>
<dbReference type="InterPro" id="IPR013025">
    <property type="entry name" value="Ribosomal_uL23-like"/>
</dbReference>
<dbReference type="InterPro" id="IPR012678">
    <property type="entry name" value="Ribosomal_uL23/eL15/eS24_sf"/>
</dbReference>
<dbReference type="InterPro" id="IPR001014">
    <property type="entry name" value="Ribosomal_uL23_CS"/>
</dbReference>
<dbReference type="NCBIfam" id="NF004359">
    <property type="entry name" value="PRK05738.1-3"/>
    <property type="match status" value="1"/>
</dbReference>
<dbReference type="NCBIfam" id="NF004363">
    <property type="entry name" value="PRK05738.2-4"/>
    <property type="match status" value="1"/>
</dbReference>
<dbReference type="NCBIfam" id="NF004365">
    <property type="entry name" value="PRK05738.3-1"/>
    <property type="match status" value="1"/>
</dbReference>
<dbReference type="NCBIfam" id="NF004366">
    <property type="entry name" value="PRK05738.3-2"/>
    <property type="match status" value="1"/>
</dbReference>
<dbReference type="NCBIfam" id="NF004368">
    <property type="entry name" value="PRK05738.3-4"/>
    <property type="match status" value="1"/>
</dbReference>
<dbReference type="PANTHER" id="PTHR11620">
    <property type="entry name" value="60S RIBOSOMAL PROTEIN L23A"/>
    <property type="match status" value="1"/>
</dbReference>
<dbReference type="Pfam" id="PF00276">
    <property type="entry name" value="Ribosomal_L23"/>
    <property type="match status" value="1"/>
</dbReference>
<dbReference type="SUPFAM" id="SSF54189">
    <property type="entry name" value="Ribosomal proteins S24e, L23 and L15e"/>
    <property type="match status" value="1"/>
</dbReference>
<dbReference type="PROSITE" id="PS00050">
    <property type="entry name" value="RIBOSOMAL_L23"/>
    <property type="match status" value="1"/>
</dbReference>
<evidence type="ECO:0000255" key="1">
    <source>
        <dbReference type="HAMAP-Rule" id="MF_01369"/>
    </source>
</evidence>
<evidence type="ECO:0000305" key="2"/>
<protein>
    <recommendedName>
        <fullName evidence="1">Large ribosomal subunit protein uL23</fullName>
    </recommendedName>
    <alternativeName>
        <fullName evidence="2">50S ribosomal protein L23</fullName>
    </alternativeName>
</protein>
<keyword id="KW-0687">Ribonucleoprotein</keyword>
<keyword id="KW-0689">Ribosomal protein</keyword>
<keyword id="KW-0694">RNA-binding</keyword>
<keyword id="KW-0699">rRNA-binding</keyword>
<feature type="chain" id="PRO_1000068137" description="Large ribosomal subunit protein uL23">
    <location>
        <begin position="1"/>
        <end position="100"/>
    </location>
</feature>
<accession>A2BTD5</accession>
<sequence>MSKLFDSRLADVIRKPVITEKATNALDLNQYTFEVDHRAAKPQIKAAVEALFSVKVIGVNTMNPPRRTRRVGKFSGKRSQVKKAIVRLAEGDKIQLFPES</sequence>
<comment type="function">
    <text evidence="1">One of the early assembly proteins it binds 23S rRNA. One of the proteins that surrounds the polypeptide exit tunnel on the outside of the ribosome. Forms the main docking site for trigger factor binding to the ribosome.</text>
</comment>
<comment type="subunit">
    <text evidence="1">Part of the 50S ribosomal subunit. Contacts protein L29, and trigger factor when it is bound to the ribosome.</text>
</comment>
<comment type="similarity">
    <text evidence="1">Belongs to the universal ribosomal protein uL23 family.</text>
</comment>
<gene>
    <name evidence="1" type="primary">rplW</name>
    <name evidence="1" type="synonym">rpl23</name>
    <name type="ordered locus">A9601_17631</name>
</gene>
<name>RL23_PROMS</name>
<proteinExistence type="inferred from homology"/>